<reference key="1">
    <citation type="journal article" date="1995" name="Cell">
        <title>The peptide repeat domain of nucleoporin Nup98 functions as a docking site in transport across the nuclear pore complex.</title>
        <authorList>
            <person name="Radu A."/>
            <person name="Moore M.S."/>
            <person name="Blobel G."/>
        </authorList>
    </citation>
    <scope>NUCLEOTIDE SEQUENCE [MRNA] (ISOFORM 2)</scope>
    <scope>PARTIAL PROTEIN SEQUENCE</scope>
    <source>
        <tissue>Liver</tissue>
    </source>
</reference>
<reference key="2">
    <citation type="submission" date="2005-09" db="EMBL/GenBank/DDBJ databases">
        <authorList>
            <person name="Mural R.J."/>
            <person name="Li P.W."/>
            <person name="Adams M.D."/>
            <person name="Amanatides P.G."/>
            <person name="Baden-Tillson H."/>
            <person name="Barnstead M."/>
            <person name="Chin S.H."/>
            <person name="Dew I."/>
            <person name="Evans C.A."/>
            <person name="Ferriera S."/>
            <person name="Flanigan M."/>
            <person name="Fosler C."/>
            <person name="Glodek A."/>
            <person name="Gu Z."/>
            <person name="Holt R.A."/>
            <person name="Jennings D."/>
            <person name="Kraft C.L."/>
            <person name="Lu F."/>
            <person name="Nguyen T."/>
            <person name="Nusskern D.R."/>
            <person name="Pfannkoch C.M."/>
            <person name="Sitter C."/>
            <person name="Sutton G.G."/>
            <person name="Venter J.C."/>
            <person name="Wang Z."/>
            <person name="Woodage T."/>
            <person name="Zheng X.H."/>
            <person name="Zhong F."/>
        </authorList>
    </citation>
    <scope>NUCLEOTIDE SEQUENCE [LARGE SCALE GENOMIC DNA] (ISOFORM 1)</scope>
    <source>
        <strain>Brown Norway</strain>
    </source>
</reference>
<reference key="3">
    <citation type="journal article" date="1999" name="J. Cell Biol.">
        <title>A conserved biogenesis pathway for nucleoporins: proteolytic processing of a 186-kilodalton precursor generates Nup98 and the novel nucleoporin, Nup96.</title>
        <authorList>
            <person name="Fontoura B.M.A."/>
            <person name="Blobel G."/>
            <person name="Matunis M.J."/>
        </authorList>
    </citation>
    <scope>SUBCELLULAR LOCATION</scope>
</reference>
<reference key="4">
    <citation type="journal article" date="2002" name="J. Cell Biol.">
        <title>Tpr is localized within the nuclear basket of the pore complex and has a role in nuclear protein export.</title>
        <authorList>
            <person name="Frosst P."/>
            <person name="Guan T."/>
            <person name="Subauste C."/>
            <person name="Hahn K."/>
            <person name="Gerace L."/>
        </authorList>
    </citation>
    <scope>SUBCELLULAR LOCATION</scope>
</reference>
<reference key="5">
    <citation type="journal article" date="2012" name="Nat. Commun.">
        <title>Quantitative maps of protein phosphorylation sites across 14 different rat organs and tissues.</title>
        <authorList>
            <person name="Lundby A."/>
            <person name="Secher A."/>
            <person name="Lage K."/>
            <person name="Nordsborg N.B."/>
            <person name="Dmytriyev A."/>
            <person name="Lundby C."/>
            <person name="Olsen J.V."/>
        </authorList>
    </citation>
    <scope>PHOSPHORYLATION [LARGE SCALE ANALYSIS] AT SER-623; SER-653; SER-888 AND SER-934</scope>
    <scope>IDENTIFICATION BY MASS SPECTROMETRY [LARGE SCALE ANALYSIS]</scope>
</reference>
<name>NUP98_RAT</name>
<evidence type="ECO:0000250" key="1"/>
<evidence type="ECO:0000250" key="2">
    <source>
        <dbReference type="UniProtKB" id="P52948"/>
    </source>
</evidence>
<evidence type="ECO:0000250" key="3">
    <source>
        <dbReference type="UniProtKB" id="Q6PFD9"/>
    </source>
</evidence>
<evidence type="ECO:0000255" key="4">
    <source>
        <dbReference type="PROSITE-ProRule" id="PRU00765"/>
    </source>
</evidence>
<evidence type="ECO:0000256" key="5">
    <source>
        <dbReference type="SAM" id="MobiDB-lite"/>
    </source>
</evidence>
<evidence type="ECO:0000269" key="6">
    <source>
    </source>
</evidence>
<evidence type="ECO:0000269" key="7">
    <source>
    </source>
</evidence>
<evidence type="ECO:0000303" key="8">
    <source>
    </source>
</evidence>
<evidence type="ECO:0000305" key="9"/>
<evidence type="ECO:0007744" key="10">
    <source>
    </source>
</evidence>
<dbReference type="EC" id="3.4.21.-" evidence="2"/>
<dbReference type="EMBL" id="CH473956">
    <property type="protein sequence ID" value="EDM18207.1"/>
    <property type="molecule type" value="Genomic_DNA"/>
</dbReference>
<dbReference type="EMBL" id="L39991">
    <property type="protein sequence ID" value="AAC42054.1"/>
    <property type="molecule type" value="mRNA"/>
</dbReference>
<dbReference type="PIR" id="A56517">
    <property type="entry name" value="A56517"/>
</dbReference>
<dbReference type="RefSeq" id="NP_112336.2">
    <molecule id="P49793-1"/>
    <property type="nucleotide sequence ID" value="NM_031074.2"/>
</dbReference>
<dbReference type="RefSeq" id="XP_006229954.1">
    <property type="nucleotide sequence ID" value="XM_006229892.3"/>
</dbReference>
<dbReference type="RefSeq" id="XP_017445261.1">
    <property type="nucleotide sequence ID" value="XM_017589772.1"/>
</dbReference>
<dbReference type="SMR" id="P49793"/>
<dbReference type="BioGRID" id="249610">
    <property type="interactions" value="1"/>
</dbReference>
<dbReference type="CORUM" id="P49793"/>
<dbReference type="FunCoup" id="P49793">
    <property type="interactions" value="5174"/>
</dbReference>
<dbReference type="STRING" id="10116.ENSRNOP00000027575"/>
<dbReference type="MEROPS" id="S59.001"/>
<dbReference type="iPTMnet" id="P49793"/>
<dbReference type="PhosphoSitePlus" id="P49793"/>
<dbReference type="jPOST" id="P49793"/>
<dbReference type="PaxDb" id="10116-ENSRNOP00000027575"/>
<dbReference type="Ensembl" id="ENSRNOT00000027575.8">
    <molecule id="P49793-1"/>
    <property type="protein sequence ID" value="ENSRNOP00000027575.5"/>
    <property type="gene ID" value="ENSRNOG00000020347.8"/>
</dbReference>
<dbReference type="GeneID" id="81738"/>
<dbReference type="KEGG" id="rno:81738"/>
<dbReference type="UCSC" id="RGD:71033">
    <molecule id="P49793-1"/>
    <property type="organism name" value="rat"/>
</dbReference>
<dbReference type="AGR" id="RGD:71033"/>
<dbReference type="CTD" id="4928"/>
<dbReference type="RGD" id="71033">
    <property type="gene designation" value="Nup98"/>
</dbReference>
<dbReference type="eggNOG" id="KOG0845">
    <property type="taxonomic scope" value="Eukaryota"/>
</dbReference>
<dbReference type="GeneTree" id="ENSGT00550000074799"/>
<dbReference type="HOGENOM" id="CLU_002330_1_0_1"/>
<dbReference type="InParanoid" id="P49793"/>
<dbReference type="OMA" id="PMGKGLN"/>
<dbReference type="OrthoDB" id="64370at9989"/>
<dbReference type="PhylomeDB" id="P49793"/>
<dbReference type="TreeFam" id="TF343335"/>
<dbReference type="Reactome" id="R-RNO-141444">
    <property type="pathway name" value="Amplification of signal from unattached kinetochores via a MAD2 inhibitory signal"/>
</dbReference>
<dbReference type="Reactome" id="R-RNO-159227">
    <property type="pathway name" value="Transport of the SLBP independent Mature mRNA"/>
</dbReference>
<dbReference type="Reactome" id="R-RNO-159230">
    <property type="pathway name" value="Transport of the SLBP Dependant Mature mRNA"/>
</dbReference>
<dbReference type="Reactome" id="R-RNO-159231">
    <property type="pathway name" value="Transport of Mature mRNA Derived from an Intronless Transcript"/>
</dbReference>
<dbReference type="Reactome" id="R-RNO-159236">
    <property type="pathway name" value="Transport of Mature mRNA derived from an Intron-Containing Transcript"/>
</dbReference>
<dbReference type="Reactome" id="R-RNO-170822">
    <property type="pathway name" value="Regulation of Glucokinase by Glucokinase Regulatory Protein"/>
</dbReference>
<dbReference type="Reactome" id="R-RNO-191859">
    <property type="pathway name" value="snRNP Assembly"/>
</dbReference>
<dbReference type="Reactome" id="R-RNO-2467813">
    <property type="pathway name" value="Separation of Sister Chromatids"/>
</dbReference>
<dbReference type="Reactome" id="R-RNO-2500257">
    <property type="pathway name" value="Resolution of Sister Chromatid Cohesion"/>
</dbReference>
<dbReference type="Reactome" id="R-RNO-3108214">
    <property type="pathway name" value="SUMOylation of DNA damage response and repair proteins"/>
</dbReference>
<dbReference type="Reactome" id="R-RNO-3232142">
    <property type="pathway name" value="SUMOylation of ubiquitinylation proteins"/>
</dbReference>
<dbReference type="Reactome" id="R-RNO-3301854">
    <property type="pathway name" value="Nuclear Pore Complex (NPC) Disassembly"/>
</dbReference>
<dbReference type="Reactome" id="R-RNO-3371453">
    <property type="pathway name" value="Regulation of HSF1-mediated heat shock response"/>
</dbReference>
<dbReference type="Reactome" id="R-RNO-4085377">
    <property type="pathway name" value="SUMOylation of SUMOylation proteins"/>
</dbReference>
<dbReference type="Reactome" id="R-RNO-4551638">
    <property type="pathway name" value="SUMOylation of chromatin organization proteins"/>
</dbReference>
<dbReference type="Reactome" id="R-RNO-4570464">
    <property type="pathway name" value="SUMOylation of RNA binding proteins"/>
</dbReference>
<dbReference type="Reactome" id="R-RNO-4615885">
    <property type="pathway name" value="SUMOylation of DNA replication proteins"/>
</dbReference>
<dbReference type="Reactome" id="R-RNO-5578749">
    <property type="pathway name" value="Transcriptional regulation by small RNAs"/>
</dbReference>
<dbReference type="Reactome" id="R-RNO-5663220">
    <property type="pathway name" value="RHO GTPases Activate Formins"/>
</dbReference>
<dbReference type="Reactome" id="R-RNO-68877">
    <property type="pathway name" value="Mitotic Prometaphase"/>
</dbReference>
<dbReference type="Reactome" id="R-RNO-9615933">
    <property type="pathway name" value="Postmitotic nuclear pore complex (NPC) reformation"/>
</dbReference>
<dbReference type="Reactome" id="R-RNO-9648025">
    <property type="pathway name" value="EML4 and NUDC in mitotic spindle formation"/>
</dbReference>
<dbReference type="PRO" id="PR:P49793"/>
<dbReference type="Proteomes" id="UP000002494">
    <property type="component" value="Chromosome 1"/>
</dbReference>
<dbReference type="Proteomes" id="UP000234681">
    <property type="component" value="Chromosome 1"/>
</dbReference>
<dbReference type="Bgee" id="ENSRNOG00000020347">
    <property type="expression patterns" value="Expressed in testis and 19 other cell types or tissues"/>
</dbReference>
<dbReference type="ExpressionAtlas" id="P49793">
    <property type="expression patterns" value="baseline and differential"/>
</dbReference>
<dbReference type="GO" id="GO:0000776">
    <property type="term" value="C:kinetochore"/>
    <property type="evidence" value="ECO:0000266"/>
    <property type="project" value="RGD"/>
</dbReference>
<dbReference type="GO" id="GO:0016604">
    <property type="term" value="C:nuclear body"/>
    <property type="evidence" value="ECO:0000266"/>
    <property type="project" value="RGD"/>
</dbReference>
<dbReference type="GO" id="GO:0005635">
    <property type="term" value="C:nuclear envelope"/>
    <property type="evidence" value="ECO:0000266"/>
    <property type="project" value="RGD"/>
</dbReference>
<dbReference type="GO" id="GO:0042405">
    <property type="term" value="C:nuclear inclusion body"/>
    <property type="evidence" value="ECO:0000314"/>
    <property type="project" value="UniProtKB"/>
</dbReference>
<dbReference type="GO" id="GO:0031965">
    <property type="term" value="C:nuclear membrane"/>
    <property type="evidence" value="ECO:0000314"/>
    <property type="project" value="UniProtKB"/>
</dbReference>
<dbReference type="GO" id="GO:0034399">
    <property type="term" value="C:nuclear periphery"/>
    <property type="evidence" value="ECO:0000314"/>
    <property type="project" value="UniProtKB"/>
</dbReference>
<dbReference type="GO" id="GO:0005643">
    <property type="term" value="C:nuclear pore"/>
    <property type="evidence" value="ECO:0000314"/>
    <property type="project" value="RGD"/>
</dbReference>
<dbReference type="GO" id="GO:0044614">
    <property type="term" value="C:nuclear pore cytoplasmic filaments"/>
    <property type="evidence" value="ECO:0000318"/>
    <property type="project" value="GO_Central"/>
</dbReference>
<dbReference type="GO" id="GO:0044615">
    <property type="term" value="C:nuclear pore nuclear basket"/>
    <property type="evidence" value="ECO:0000314"/>
    <property type="project" value="UniProtKB"/>
</dbReference>
<dbReference type="GO" id="GO:0031080">
    <property type="term" value="C:nuclear pore outer ring"/>
    <property type="evidence" value="ECO:0000250"/>
    <property type="project" value="UniProtKB"/>
</dbReference>
<dbReference type="GO" id="GO:0005654">
    <property type="term" value="C:nucleoplasm"/>
    <property type="evidence" value="ECO:0000314"/>
    <property type="project" value="RGD"/>
</dbReference>
<dbReference type="GO" id="GO:0005634">
    <property type="term" value="C:nucleus"/>
    <property type="evidence" value="ECO:0000266"/>
    <property type="project" value="RGD"/>
</dbReference>
<dbReference type="GO" id="GO:1990904">
    <property type="term" value="C:ribonucleoprotein complex"/>
    <property type="evidence" value="ECO:0000250"/>
    <property type="project" value="UniProtKB"/>
</dbReference>
<dbReference type="GO" id="GO:0140693">
    <property type="term" value="F:molecular condensate scaffold activity"/>
    <property type="evidence" value="ECO:0000266"/>
    <property type="project" value="RGD"/>
</dbReference>
<dbReference type="GO" id="GO:0003729">
    <property type="term" value="F:mRNA binding"/>
    <property type="evidence" value="ECO:0000266"/>
    <property type="project" value="RGD"/>
</dbReference>
<dbReference type="GO" id="GO:0008139">
    <property type="term" value="F:nuclear localization sequence binding"/>
    <property type="evidence" value="ECO:0000314"/>
    <property type="project" value="RGD"/>
</dbReference>
<dbReference type="GO" id="GO:0042277">
    <property type="term" value="F:peptide binding"/>
    <property type="evidence" value="ECO:0000314"/>
    <property type="project" value="RGD"/>
</dbReference>
<dbReference type="GO" id="GO:1990841">
    <property type="term" value="F:promoter-specific chromatin binding"/>
    <property type="evidence" value="ECO:0000250"/>
    <property type="project" value="UniProtKB"/>
</dbReference>
<dbReference type="GO" id="GO:0003723">
    <property type="term" value="F:RNA binding"/>
    <property type="evidence" value="ECO:0000318"/>
    <property type="project" value="GO_Central"/>
</dbReference>
<dbReference type="GO" id="GO:0008236">
    <property type="term" value="F:serine-type peptidase activity"/>
    <property type="evidence" value="ECO:0007669"/>
    <property type="project" value="UniProtKB-KW"/>
</dbReference>
<dbReference type="GO" id="GO:0017056">
    <property type="term" value="F:structural constituent of nuclear pore"/>
    <property type="evidence" value="ECO:0000250"/>
    <property type="project" value="UniProtKB"/>
</dbReference>
<dbReference type="GO" id="GO:0003713">
    <property type="term" value="F:transcription coactivator activity"/>
    <property type="evidence" value="ECO:0000250"/>
    <property type="project" value="UniProtKB"/>
</dbReference>
<dbReference type="GO" id="GO:0051028">
    <property type="term" value="P:mRNA transport"/>
    <property type="evidence" value="ECO:0007669"/>
    <property type="project" value="UniProtKB-KW"/>
</dbReference>
<dbReference type="GO" id="GO:0051292">
    <property type="term" value="P:nuclear pore complex assembly"/>
    <property type="evidence" value="ECO:0000250"/>
    <property type="project" value="UniProtKB"/>
</dbReference>
<dbReference type="GO" id="GO:0048026">
    <property type="term" value="P:positive regulation of mRNA splicing, via spliceosome"/>
    <property type="evidence" value="ECO:0000250"/>
    <property type="project" value="UniProtKB"/>
</dbReference>
<dbReference type="GO" id="GO:0000973">
    <property type="term" value="P:post-transcriptional tethering of RNA polymerase II gene DNA at nuclear periphery"/>
    <property type="evidence" value="ECO:0000318"/>
    <property type="project" value="GO_Central"/>
</dbReference>
<dbReference type="GO" id="GO:0006606">
    <property type="term" value="P:protein import into nucleus"/>
    <property type="evidence" value="ECO:0000315"/>
    <property type="project" value="RGD"/>
</dbReference>
<dbReference type="GO" id="GO:0006508">
    <property type="term" value="P:proteolysis"/>
    <property type="evidence" value="ECO:0007669"/>
    <property type="project" value="UniProtKB-KW"/>
</dbReference>
<dbReference type="GO" id="GO:0006405">
    <property type="term" value="P:RNA export from nucleus"/>
    <property type="evidence" value="ECO:0000318"/>
    <property type="project" value="GO_Central"/>
</dbReference>
<dbReference type="GO" id="GO:0034398">
    <property type="term" value="P:telomere tethering at nuclear periphery"/>
    <property type="evidence" value="ECO:0000318"/>
    <property type="project" value="GO_Central"/>
</dbReference>
<dbReference type="FunFam" id="1.10.10.2360:FF:000001">
    <property type="entry name" value="Nuclear pore complex protein Nup98-Nup96"/>
    <property type="match status" value="1"/>
</dbReference>
<dbReference type="FunFam" id="1.25.40.690:FF:000001">
    <property type="entry name" value="Nuclear pore complex protein Nup98-Nup96"/>
    <property type="match status" value="1"/>
</dbReference>
<dbReference type="FunFam" id="3.30.1610.10:FF:000001">
    <property type="entry name" value="Nuclear pore complex protein Nup98-Nup96"/>
    <property type="match status" value="1"/>
</dbReference>
<dbReference type="Gene3D" id="1.10.10.2360">
    <property type="match status" value="1"/>
</dbReference>
<dbReference type="Gene3D" id="1.25.40.690">
    <property type="match status" value="1"/>
</dbReference>
<dbReference type="Gene3D" id="3.30.1610.10">
    <property type="entry name" value="Peptidase S59, nucleoporin"/>
    <property type="match status" value="1"/>
</dbReference>
<dbReference type="InterPro" id="IPR037665">
    <property type="entry name" value="Nucleoporin_S59-like"/>
</dbReference>
<dbReference type="InterPro" id="IPR007230">
    <property type="entry name" value="Nup98_auto-Pept-S59_dom"/>
</dbReference>
<dbReference type="InterPro" id="IPR036903">
    <property type="entry name" value="Nup98_auto-Pept-S59_dom_sf"/>
</dbReference>
<dbReference type="InterPro" id="IPR021967">
    <property type="entry name" value="Nup98_C"/>
</dbReference>
<dbReference type="PANTHER" id="PTHR23198:SF6">
    <property type="entry name" value="NUCLEAR PORE COMPLEX PROTEIN NUP98-NUP96"/>
    <property type="match status" value="1"/>
</dbReference>
<dbReference type="PANTHER" id="PTHR23198">
    <property type="entry name" value="NUCLEOPORIN"/>
    <property type="match status" value="1"/>
</dbReference>
<dbReference type="Pfam" id="PF04096">
    <property type="entry name" value="Nucleoporin2"/>
    <property type="match status" value="1"/>
</dbReference>
<dbReference type="Pfam" id="PF12110">
    <property type="entry name" value="Nup96"/>
    <property type="match status" value="1"/>
</dbReference>
<dbReference type="Pfam" id="PF21240">
    <property type="entry name" value="Nup98_GLEBS"/>
    <property type="match status" value="1"/>
</dbReference>
<dbReference type="SUPFAM" id="SSF82215">
    <property type="entry name" value="C-terminal autoproteolytic domain of nucleoporin nup98"/>
    <property type="match status" value="1"/>
</dbReference>
<dbReference type="PROSITE" id="PS51434">
    <property type="entry name" value="NUP_C"/>
    <property type="match status" value="1"/>
</dbReference>
<feature type="chain" id="PRO_0000204890" description="Nuclear pore complex protein Nup98">
    <location>
        <begin position="1"/>
        <end position="880"/>
    </location>
</feature>
<feature type="chain" id="PRO_0000405578" description="Nuclear pore complex protein Nup96">
    <location>
        <begin position="881"/>
        <end position="1816"/>
    </location>
</feature>
<feature type="domain" description="Peptidase S59" evidence="4">
    <location>
        <begin position="738"/>
        <end position="880"/>
    </location>
</feature>
<feature type="region of interest" description="FG repeats 1">
    <location>
        <begin position="1"/>
        <end position="156"/>
    </location>
</feature>
<feature type="region of interest" description="GLEBS; interaction with RAE1" evidence="1">
    <location>
        <begin position="157"/>
        <end position="213"/>
    </location>
</feature>
<feature type="region of interest" description="FG repeats 2">
    <location>
        <begin position="214"/>
        <end position="480"/>
    </location>
</feature>
<feature type="region of interest" description="Disordered" evidence="5">
    <location>
        <begin position="512"/>
        <end position="535"/>
    </location>
</feature>
<feature type="region of interest" description="Disordered" evidence="5">
    <location>
        <begin position="663"/>
        <end position="682"/>
    </location>
</feature>
<feature type="region of interest" description="Disordered" evidence="5">
    <location>
        <begin position="886"/>
        <end position="937"/>
    </location>
</feature>
<feature type="compositionally biased region" description="Basic and acidic residues" evidence="5">
    <location>
        <begin position="525"/>
        <end position="534"/>
    </location>
</feature>
<feature type="compositionally biased region" description="Polar residues" evidence="5">
    <location>
        <begin position="670"/>
        <end position="682"/>
    </location>
</feature>
<feature type="active site" description="Nucleophile" evidence="2">
    <location>
        <position position="881"/>
    </location>
</feature>
<feature type="site" description="Cleavage; by autolysis" evidence="2">
    <location>
        <begin position="880"/>
        <end position="881"/>
    </location>
</feature>
<feature type="modified residue" description="Phosphoserine" evidence="2">
    <location>
        <position position="524"/>
    </location>
</feature>
<feature type="modified residue" description="N6-acetyllysine; alternate" evidence="2">
    <location>
        <position position="603"/>
    </location>
</feature>
<feature type="modified residue" description="Phosphoserine" evidence="2">
    <location>
        <position position="608"/>
    </location>
</feature>
<feature type="modified residue" description="Phosphoserine" evidence="2">
    <location>
        <position position="612"/>
    </location>
</feature>
<feature type="modified residue" description="Phosphoserine" evidence="2">
    <location>
        <position position="618"/>
    </location>
</feature>
<feature type="modified residue" description="Phosphoserine" evidence="10">
    <location>
        <position position="623"/>
    </location>
</feature>
<feature type="modified residue" description="Phosphoserine" evidence="2">
    <location>
        <position position="625"/>
    </location>
</feature>
<feature type="modified residue" description="Phosphoserine" evidence="10">
    <location>
        <position position="653"/>
    </location>
</feature>
<feature type="modified residue" description="Phosphothreonine" evidence="2">
    <location>
        <position position="670"/>
    </location>
</feature>
<feature type="modified residue" description="Phosphoserine" evidence="2">
    <location>
        <position position="673"/>
    </location>
</feature>
<feature type="modified residue" description="Phosphoserine" evidence="3">
    <location>
        <position position="680"/>
    </location>
</feature>
<feature type="modified residue" description="Phosphoserine" evidence="2">
    <location>
        <position position="681"/>
    </location>
</feature>
<feature type="modified residue" description="Phosphoserine" evidence="2">
    <location>
        <position position="839"/>
    </location>
</feature>
<feature type="modified residue" description="Phosphoserine" evidence="10">
    <location>
        <position position="888"/>
    </location>
</feature>
<feature type="modified residue" description="Phosphoserine" evidence="10">
    <location>
        <position position="934"/>
    </location>
</feature>
<feature type="modified residue" description="Phosphoserine" evidence="2">
    <location>
        <position position="1027"/>
    </location>
</feature>
<feature type="modified residue" description="Phosphoserine" evidence="2">
    <location>
        <position position="1042"/>
    </location>
</feature>
<feature type="modified residue" description="Phosphoserine" evidence="2">
    <location>
        <position position="1059"/>
    </location>
</feature>
<feature type="modified residue" description="Phosphoserine" evidence="3">
    <location>
        <position position="1063"/>
    </location>
</feature>
<feature type="modified residue" description="Phosphothreonine" evidence="2">
    <location>
        <position position="1069"/>
    </location>
</feature>
<feature type="modified residue" description="Phosphoserine" evidence="3">
    <location>
        <position position="1328"/>
    </location>
</feature>
<feature type="modified residue" description="Phosphothreonine" evidence="3">
    <location>
        <position position="1771"/>
    </location>
</feature>
<feature type="cross-link" description="Glycyl lysine isopeptide (Lys-Gly) (interchain with G-Cter in SUMO2)" evidence="2">
    <location>
        <position position="563"/>
    </location>
</feature>
<feature type="cross-link" description="Glycyl lysine isopeptide (Lys-Gly) (interchain with G-Cter in SUMO2); alternate" evidence="2">
    <location>
        <position position="603"/>
    </location>
</feature>
<feature type="cross-link" description="Glycyl lysine isopeptide (Lys-Gly) (interchain with G-Cter in SUMO2)" evidence="2">
    <location>
        <position position="665"/>
    </location>
</feature>
<feature type="splice variant" id="VSP_040702" description="In isoform 2." evidence="8">
    <original>PQSQSPEVE</original>
    <variation>TSGREGQRM</variation>
    <location>
        <begin position="930"/>
        <end position="938"/>
    </location>
</feature>
<feature type="splice variant" id="VSP_040703" description="In isoform 2." evidence="8">
    <location>
        <begin position="939"/>
        <end position="1816"/>
    </location>
</feature>
<feature type="sequence conflict" description="In Ref. 1; AAC42054." evidence="9" ref="1">
    <location>
        <position position="11"/>
    </location>
</feature>
<feature type="sequence conflict" description="In Ref. 1; AAC42054." evidence="9" ref="1">
    <original>N</original>
    <variation>S</variation>
    <location>
        <position position="46"/>
    </location>
</feature>
<feature type="sequence conflict" description="In Ref. 1; AAC42054." evidence="9" ref="1">
    <original>F</original>
    <variation>L</variation>
    <location>
        <position position="68"/>
    </location>
</feature>
<proteinExistence type="evidence at protein level"/>
<protein>
    <recommendedName>
        <fullName>Nuclear pore complex protein Nup98-Nup96</fullName>
        <ecNumber evidence="2">3.4.21.-</ecNumber>
    </recommendedName>
    <component>
        <recommendedName>
            <fullName>Nuclear pore complex protein Nup98</fullName>
        </recommendedName>
        <alternativeName>
            <fullName>98 kDa nucleoporin</fullName>
        </alternativeName>
        <alternativeName>
            <fullName>Nucleoporin Nup98</fullName>
            <shortName>Nup98</shortName>
        </alternativeName>
    </component>
    <component>
        <recommendedName>
            <fullName>Nuclear pore complex protein Nup96</fullName>
        </recommendedName>
        <alternativeName>
            <fullName>96 kDa nucleoporin</fullName>
        </alternativeName>
        <alternativeName>
            <fullName>Nucleoporin Nup96</fullName>
            <shortName>Nup96</shortName>
        </alternativeName>
    </component>
</protein>
<sequence length="1816" mass="197283">MFNKSFGTPFGGGTGGFGTTSTFGQNTGFGTTSGGAFGTSAFGSSNNTGGLFGNSQTKPGGLFGTSSFSQPATSTSTGFGFGTSTGTSNSLFGTANTGTSLFSSQNNAFAQNKPTGFGNFGTSTSSGGLFGTTNTTSNPFGNTSGSLFGPSSFTAAPTGTTIKFNPPTGTDTMVKAGVSTNISTKHQCITAMKEYESKSLEELRLEDYQANRKGPQNQVGAGTTTGLFGSSPATSSATGLFSSSTTNSAFSYGQNKTAFGTSTTGFGTNPGGLFGQQNQQTTSLFSKPFGQATTTPNTGFSFGNTSTLGQPSTNTMGLFGVTQASQPGGLFGTATNTSTGTAFGTGTGLFGQPNTGFGAVGSTLFGNNKLTTFGTSTTSAPSFGTTSGGLFGNKPTLTLGTNTNTSNFGFGTNNSGSSIFGSKPAAGTLGTGLGTGFGTALGAGQASLFGNNQPKIGGPLGTGAFGAPGFNTSTAILGFGAPQAPVALTDPNASAAQQAVLQQHLNSLTYSPFGDSPLFRNPMSDPKKKEERLKPTNPAAQKALTTPTHYKLTPRPATRVRPKALQTTGTAKSHLFDGLDDDEPSLANGAFMPKKSIKKLVLKNLNNSNLFSPVNHDSEDLASPSEYPENGERFSFLSKPVDENHQQDGDDDSLVSRFYTNPIAKPIPQTPESAGNKNNSSSNVEDTFIALNMRAALRNGLEGSSEETSFHDESLQDDRDEIENSAFQIHPAGIVLTKVGYYTIPSMDDLAKITNEKGECIVSDFTIGRKGYGSIYFEGDVNLTNLNLDDIVHIRRKEVIVYVDDNQKPPVGEGLNRKAEVTLDGVWPTDKTSRCLIKSPDRLADINYEGRLEAVSRKQGAQFKEYRPETGSWVFKVSHFSKYGLQDSDEEEEEHPPKTTSKKLKTAPLPPAGQATTFQMTLNGKPAPPPQSQSPEVEQLGRVVELDSDMVDITQEPVPDSVLEESVPEDQEPVSASTQIASSLGINPHVLQIMKASLLVDEEDVDAMEQRFGHFPSRGDTAQEICSPRLPISASHSSKSRSIVGGLLQSKFASGTFLSPSASVQECRTPRTSSLMNVPSTSPWSVPLPLATVFTVPSPAPEVPLKTVGIRRQPGLVPLEKSITYGKGKLLMDMALFMGRSFRVGWGPNWTLANSGEQLHGSHELENHQVAESMEYGFLPNPVAVKSLSESPFKVHLEKLGLRQRKLDEDLQLYQTPLELKLKHSTVHVDELCPLIVPNPGVSVIHGYADWVKKSPRDLLELPIVKHWSLTWTLCEALWGHLKELDSQLDEPSEYIQTLERRRAFSRWLSHTAAPQIEEEVSLTRRDSPIEAVFSYLTGSRISEACCLAQQSGDHRLALLLSQLVGSQSVRELLTMQLADWHQLQADSFIHDERLRIFALLAGKPVWQLSEQKQINVCSQLDWKRTLAIHLWYLLPPTASISRALSMYEEAFQNTCEGDKYACPPLPSYLEGSGCVVEEEKDPQRPLQDVCFHLLKLYSDRHYGLNQLLEPRSITADPLDYRLSWHLWEVLRALNYTHLSEQCEGVLQASYAGQLESEGLWEWAIFVFLHIDNSGMREKAVRELLTRHCQLSETPESWAKETFLTQKLCVPAEWIHEAKAVRAHMESNKHLEALYLFKAGHWNRCHKLVVRHLASDAIINENYDYLKGFLEDLAPPERSSLIQDWETSGLVYLDYIRVIEMLHRIQQVDCSGYELEHLHTKVTSLCNRIEQIPCYNAKDRLAQSDMAKRVANLLRVVLSLQHTPDATSNSTPDPQRVPLRLLAPHIGRLPMPEDYALEELRGLTQSYLRELTVGSQ</sequence>
<gene>
    <name type="primary">Nup98</name>
</gene>
<organism>
    <name type="scientific">Rattus norvegicus</name>
    <name type="common">Rat</name>
    <dbReference type="NCBI Taxonomy" id="10116"/>
    <lineage>
        <taxon>Eukaryota</taxon>
        <taxon>Metazoa</taxon>
        <taxon>Chordata</taxon>
        <taxon>Craniata</taxon>
        <taxon>Vertebrata</taxon>
        <taxon>Euteleostomi</taxon>
        <taxon>Mammalia</taxon>
        <taxon>Eutheria</taxon>
        <taxon>Euarchontoglires</taxon>
        <taxon>Glires</taxon>
        <taxon>Rodentia</taxon>
        <taxon>Myomorpha</taxon>
        <taxon>Muroidea</taxon>
        <taxon>Muridae</taxon>
        <taxon>Murinae</taxon>
        <taxon>Rattus</taxon>
    </lineage>
</organism>
<comment type="function">
    <text evidence="2">Plays a role in the nuclear pore complex (NPC) assembly and/or maintenance. Involved in the bidirectional transport across the NPC. May anchor NUP153 and TPR to the NPC.</text>
</comment>
<comment type="function">
    <text evidence="2">Plays a role in the nuclear pore complex (NPC) assembly and/or maintenance. NUP98 and NUP96 are involved in the bidirectional transport across the NPC. May anchor NUP153 and TPR to the NPC. In cooperation with DHX9, plays a role in transcription and alternative splicing activation of a subset of genes. Involved in the localization of DHX9 in discrete intranuclear foci (GLFG-body).</text>
</comment>
<comment type="subunit">
    <text evidence="2 3">Part of the nuclear pore complex (NPC). Interacts directly with NUP96. Part of the Nup160 subcomplex in the nuclear pore which is composed of NUP160, NUP133, NUP107 and NUP96; this complex plays a role in RNA export and in tethering NUP98 and NUP153 to the nucleus. Interacts with RAE1. Does not interact with TPR. Interacts directly with NUP88 and NUP214, subunits of the cytoplasmic filaments of the NPC. Interacts (via N-terminus) with DHX9 (via DRBM, OB-fold and RGG domains); this interaction occurs in a RNA-dependent manner and stimulates DHX9-mediated ATPase activity.</text>
</comment>
<comment type="subcellular location">
    <subcellularLocation>
        <location evidence="6 7">Nucleus membrane</location>
        <topology evidence="6">Peripheral membrane protein</topology>
        <orientation evidence="6">Nucleoplasmic side</orientation>
    </subcellularLocation>
    <subcellularLocation>
        <location evidence="6">Nucleus</location>
        <location evidence="6">Nuclear pore complex</location>
    </subcellularLocation>
    <subcellularLocation>
        <location evidence="6">Nucleus</location>
        <location evidence="6">Nucleoplasm</location>
    </subcellularLocation>
    <text evidence="2 6 7">Localized to the nucleoplasmic side of the nuclear pore complex (NPC), at or near the nucleoplasmic basket (PubMed:10087256). Dissociates from the dissasembled NPC structure early during prophase of mitosis (By similarity). Colocalizes with NUP153 to the nuclear basket of NPC (By similarity). Colocalizes with TPR to the nuclear basket of NPC (PubMed:10087256, PubMed:11839768). Colocalized with DHX9 in diffuse and discrete intranuclear foci (GLFG-body) (By similarity). Remains localized to the nuclear membrane after poliovirus (PV) infection (By similarity).</text>
</comment>
<comment type="alternative products">
    <event type="alternative splicing"/>
    <isoform>
        <id>P49793-1</id>
        <name>1</name>
        <name>Nup98-Nup96 precursor</name>
        <sequence type="displayed"/>
    </isoform>
    <isoform>
        <id>P49793-2</id>
        <name>2</name>
        <sequence type="described" ref="VSP_040702 VSP_040703"/>
    </isoform>
</comment>
<comment type="domain">
    <text evidence="1">Contains G-L-F-G repeats. The FG repeat domains have a direct role in the transport (By similarity).</text>
</comment>
<comment type="PTM">
    <text>The N-terminus is blocked.</text>
</comment>
<comment type="PTM">
    <text evidence="2">Isoform 1 is autoproteolytically cleaved to yield Nup98 and Nup96 or Nup98 only, respectively. Cleaved Nup98 is necessary for the targeting of Nup98 to the nuclear pore and the interaction with Nup96.</text>
</comment>
<comment type="similarity">
    <text evidence="9">Belongs to the nucleoporin GLFG family.</text>
</comment>
<accession>P49793</accession>
<accession>D3ZMW4</accession>
<keyword id="KW-0007">Acetylation</keyword>
<keyword id="KW-0025">Alternative splicing</keyword>
<keyword id="KW-0068">Autocatalytic cleavage</keyword>
<keyword id="KW-0903">Direct protein sequencing</keyword>
<keyword id="KW-0378">Hydrolase</keyword>
<keyword id="KW-1017">Isopeptide bond</keyword>
<keyword id="KW-0472">Membrane</keyword>
<keyword id="KW-0509">mRNA transport</keyword>
<keyword id="KW-0906">Nuclear pore complex</keyword>
<keyword id="KW-0539">Nucleus</keyword>
<keyword id="KW-0597">Phosphoprotein</keyword>
<keyword id="KW-0645">Protease</keyword>
<keyword id="KW-0653">Protein transport</keyword>
<keyword id="KW-1185">Reference proteome</keyword>
<keyword id="KW-0677">Repeat</keyword>
<keyword id="KW-0720">Serine protease</keyword>
<keyword id="KW-0811">Translocation</keyword>
<keyword id="KW-0813">Transport</keyword>
<keyword id="KW-0832">Ubl conjugation</keyword>